<comment type="function">
    <text evidence="1">NQR complex catalyzes the reduction of ubiquinone-1 to ubiquinol by two successive reactions, coupled with the transport of Na(+) ions from the cytoplasm to the periplasm. NqrA to NqrE are probably involved in the second step, the conversion of ubisemiquinone to ubiquinol.</text>
</comment>
<comment type="catalytic activity">
    <reaction evidence="1">
        <text>a ubiquinone + n Na(+)(in) + NADH + H(+) = a ubiquinol + n Na(+)(out) + NAD(+)</text>
        <dbReference type="Rhea" id="RHEA:47748"/>
        <dbReference type="Rhea" id="RHEA-COMP:9565"/>
        <dbReference type="Rhea" id="RHEA-COMP:9566"/>
        <dbReference type="ChEBI" id="CHEBI:15378"/>
        <dbReference type="ChEBI" id="CHEBI:16389"/>
        <dbReference type="ChEBI" id="CHEBI:17976"/>
        <dbReference type="ChEBI" id="CHEBI:29101"/>
        <dbReference type="ChEBI" id="CHEBI:57540"/>
        <dbReference type="ChEBI" id="CHEBI:57945"/>
        <dbReference type="EC" id="7.2.1.1"/>
    </reaction>
</comment>
<comment type="subunit">
    <text evidence="1">Composed of six subunits; NqrA, NqrB, NqrC, NqrD, NqrE and NqrF.</text>
</comment>
<comment type="subcellular location">
    <subcellularLocation>
        <location evidence="1">Cell inner membrane</location>
        <topology evidence="1">Multi-pass membrane protein</topology>
    </subcellularLocation>
</comment>
<comment type="similarity">
    <text evidence="1">Belongs to the NqrDE/RnfAE family.</text>
</comment>
<evidence type="ECO:0000255" key="1">
    <source>
        <dbReference type="HAMAP-Rule" id="MF_00428"/>
    </source>
</evidence>
<dbReference type="EC" id="7.2.1.1" evidence="1"/>
<dbReference type="EMBL" id="CP000438">
    <property type="protein sequence ID" value="ABJ12235.1"/>
    <property type="molecule type" value="Genomic_DNA"/>
</dbReference>
<dbReference type="RefSeq" id="WP_003119802.1">
    <property type="nucleotide sequence ID" value="NZ_CP034244.1"/>
</dbReference>
<dbReference type="SMR" id="Q02PG0"/>
<dbReference type="KEGG" id="pau:PA14_25330"/>
<dbReference type="PseudoCAP" id="PA14_25330"/>
<dbReference type="HOGENOM" id="CLU_046659_1_1_6"/>
<dbReference type="BioCyc" id="PAER208963:G1G74-2111-MONOMER"/>
<dbReference type="Proteomes" id="UP000000653">
    <property type="component" value="Chromosome"/>
</dbReference>
<dbReference type="GO" id="GO:0005886">
    <property type="term" value="C:plasma membrane"/>
    <property type="evidence" value="ECO:0007669"/>
    <property type="project" value="UniProtKB-SubCell"/>
</dbReference>
<dbReference type="GO" id="GO:0016655">
    <property type="term" value="F:oxidoreductase activity, acting on NAD(P)H, quinone or similar compound as acceptor"/>
    <property type="evidence" value="ECO:0007669"/>
    <property type="project" value="UniProtKB-UniRule"/>
</dbReference>
<dbReference type="GO" id="GO:0006814">
    <property type="term" value="P:sodium ion transport"/>
    <property type="evidence" value="ECO:0007669"/>
    <property type="project" value="UniProtKB-UniRule"/>
</dbReference>
<dbReference type="HAMAP" id="MF_00428">
    <property type="entry name" value="NqrD"/>
    <property type="match status" value="1"/>
</dbReference>
<dbReference type="InterPro" id="IPR011292">
    <property type="entry name" value="NqrD"/>
</dbReference>
<dbReference type="InterPro" id="IPR003667">
    <property type="entry name" value="NqrDE/RnfAE"/>
</dbReference>
<dbReference type="NCBIfam" id="TIGR01939">
    <property type="entry name" value="nqrD"/>
    <property type="match status" value="1"/>
</dbReference>
<dbReference type="NCBIfam" id="NF006777">
    <property type="entry name" value="PRK09292.1"/>
    <property type="match status" value="1"/>
</dbReference>
<dbReference type="NCBIfam" id="NF009070">
    <property type="entry name" value="PRK12405.1"/>
    <property type="match status" value="1"/>
</dbReference>
<dbReference type="PANTHER" id="PTHR30586">
    <property type="entry name" value="ELECTRON TRANSPORT COMPLEX PROTEIN RNFE"/>
    <property type="match status" value="1"/>
</dbReference>
<dbReference type="PANTHER" id="PTHR30586:SF1">
    <property type="entry name" value="NA(+)-TRANSLOCATING NADH-QUINONE REDUCTASE SUBUNIT D"/>
    <property type="match status" value="1"/>
</dbReference>
<dbReference type="Pfam" id="PF02508">
    <property type="entry name" value="Rnf-Nqr"/>
    <property type="match status" value="1"/>
</dbReference>
<dbReference type="PIRSF" id="PIRSF006102">
    <property type="entry name" value="NQR_DE"/>
    <property type="match status" value="1"/>
</dbReference>
<keyword id="KW-0997">Cell inner membrane</keyword>
<keyword id="KW-1003">Cell membrane</keyword>
<keyword id="KW-0406">Ion transport</keyword>
<keyword id="KW-0472">Membrane</keyword>
<keyword id="KW-0520">NAD</keyword>
<keyword id="KW-0915">Sodium</keyword>
<keyword id="KW-0739">Sodium transport</keyword>
<keyword id="KW-1278">Translocase</keyword>
<keyword id="KW-0812">Transmembrane</keyword>
<keyword id="KW-1133">Transmembrane helix</keyword>
<keyword id="KW-0813">Transport</keyword>
<keyword id="KW-0830">Ubiquinone</keyword>
<protein>
    <recommendedName>
        <fullName evidence="1">Na(+)-translocating NADH-quinone reductase subunit D</fullName>
        <shortName evidence="1">Na(+)-NQR subunit D</shortName>
        <shortName evidence="1">Na(+)-translocating NQR subunit D</shortName>
        <ecNumber evidence="1">7.2.1.1</ecNumber>
    </recommendedName>
    <alternativeName>
        <fullName evidence="1">NQR complex subunit D</fullName>
    </alternativeName>
    <alternativeName>
        <fullName evidence="1">NQR-1 subunit D</fullName>
    </alternativeName>
</protein>
<organism>
    <name type="scientific">Pseudomonas aeruginosa (strain UCBPP-PA14)</name>
    <dbReference type="NCBI Taxonomy" id="208963"/>
    <lineage>
        <taxon>Bacteria</taxon>
        <taxon>Pseudomonadati</taxon>
        <taxon>Pseudomonadota</taxon>
        <taxon>Gammaproteobacteria</taxon>
        <taxon>Pseudomonadales</taxon>
        <taxon>Pseudomonadaceae</taxon>
        <taxon>Pseudomonas</taxon>
    </lineage>
</organism>
<accession>Q02PG0</accession>
<proteinExistence type="inferred from homology"/>
<name>NQRD_PSEAB</name>
<gene>
    <name evidence="1" type="primary">nqrD</name>
    <name type="ordered locus">PA14_25330</name>
</gene>
<reference key="1">
    <citation type="journal article" date="2006" name="Genome Biol.">
        <title>Genomic analysis reveals that Pseudomonas aeruginosa virulence is combinatorial.</title>
        <authorList>
            <person name="Lee D.G."/>
            <person name="Urbach J.M."/>
            <person name="Wu G."/>
            <person name="Liberati N.T."/>
            <person name="Feinbaum R.L."/>
            <person name="Miyata S."/>
            <person name="Diggins L.T."/>
            <person name="He J."/>
            <person name="Saucier M."/>
            <person name="Deziel E."/>
            <person name="Friedman L."/>
            <person name="Li L."/>
            <person name="Grills G."/>
            <person name="Montgomery K."/>
            <person name="Kucherlapati R."/>
            <person name="Rahme L.G."/>
            <person name="Ausubel F.M."/>
        </authorList>
    </citation>
    <scope>NUCLEOTIDE SEQUENCE [LARGE SCALE GENOMIC DNA]</scope>
    <source>
        <strain>UCBPP-PA14</strain>
    </source>
</reference>
<sequence length="224" mass="24309">MMAAQPTIREVLFNPVFQNNPIGLQILGICSALAVTSNLKTATVMAIALTLVTGFSNLFISMIRRQIPSSIRMIVQMVIIASLVIVVDQVLKAYAYSLSKQLSVFVGLIITNCIVMGRAEAFAMANPPLVSFFDGIGNGLGYSAMLLVLGFVRELFGAGKLYGISVLPTVNDGGWYQPNGLLLLPPSAFFLIGLIIWALRTWKKDQVEAPTYKMAPQVSSKEAY</sequence>
<feature type="chain" id="PRO_1000060161" description="Na(+)-translocating NADH-quinone reductase subunit D">
    <location>
        <begin position="1"/>
        <end position="224"/>
    </location>
</feature>
<feature type="transmembrane region" description="Helical" evidence="1">
    <location>
        <begin position="43"/>
        <end position="63"/>
    </location>
</feature>
<feature type="transmembrane region" description="Helical" evidence="1">
    <location>
        <begin position="67"/>
        <end position="87"/>
    </location>
</feature>
<feature type="transmembrane region" description="Helical" evidence="1">
    <location>
        <begin position="104"/>
        <end position="124"/>
    </location>
</feature>
<feature type="transmembrane region" description="Helical" evidence="1">
    <location>
        <begin position="132"/>
        <end position="152"/>
    </location>
</feature>
<feature type="transmembrane region" description="Helical" evidence="1">
    <location>
        <begin position="179"/>
        <end position="199"/>
    </location>
</feature>